<reference key="1">
    <citation type="journal article" date="2005" name="Nucleic Acids Res.">
        <title>Genome dynamics and diversity of Shigella species, the etiologic agents of bacillary dysentery.</title>
        <authorList>
            <person name="Yang F."/>
            <person name="Yang J."/>
            <person name="Zhang X."/>
            <person name="Chen L."/>
            <person name="Jiang Y."/>
            <person name="Yan Y."/>
            <person name="Tang X."/>
            <person name="Wang J."/>
            <person name="Xiong Z."/>
            <person name="Dong J."/>
            <person name="Xue Y."/>
            <person name="Zhu Y."/>
            <person name="Xu X."/>
            <person name="Sun L."/>
            <person name="Chen S."/>
            <person name="Nie H."/>
            <person name="Peng J."/>
            <person name="Xu J."/>
            <person name="Wang Y."/>
            <person name="Yuan Z."/>
            <person name="Wen Y."/>
            <person name="Yao Z."/>
            <person name="Shen Y."/>
            <person name="Qiang B."/>
            <person name="Hou Y."/>
            <person name="Yu J."/>
            <person name="Jin Q."/>
        </authorList>
    </citation>
    <scope>NUCLEOTIDE SEQUENCE [LARGE SCALE GENOMIC DNA]</scope>
    <source>
        <strain>Sd197</strain>
    </source>
</reference>
<keyword id="KW-0007">Acetylation</keyword>
<keyword id="KW-0240">DNA-directed RNA polymerase</keyword>
<keyword id="KW-0460">Magnesium</keyword>
<keyword id="KW-0479">Metal-binding</keyword>
<keyword id="KW-0548">Nucleotidyltransferase</keyword>
<keyword id="KW-1185">Reference proteome</keyword>
<keyword id="KW-0804">Transcription</keyword>
<keyword id="KW-0808">Transferase</keyword>
<keyword id="KW-0862">Zinc</keyword>
<accession>Q32AG0</accession>
<sequence>MKDLLKFLKAQTKTEEFDAIKIALASPDMIRSWSFGEVKKPETINYRTFKPERDGLFCARIFGPVKDYECLCGKYKRLKHRGVICEKCGVEVTQTKVRRERMGHIELASPTAHIWFLKSLPSRIGLLLDMPLRDIERVLYFESYVVIEGGMTNLERQQILTEEQYLDALEEFGDEFDAKMGAEAIQALLKSMDLEQECEQLREELNETNSETKRKKLTKRIKLLEAFVQSGNKPEWMILTVLPVLPPDLRPLVPLDGGRFATSDLNDLYRRVINRNNRLKRLLDLAAPDIIVRNEKRMLQEAVDALLDNGRRGRAITGSNKRPLKSLADMIKGKQGRFRQNLLGKRVDYSGRSVITVGPYLRLHQCGLPKKMALELFKPFIYGKLELRGLATTIKAAKKMVEREEAVVWDILDEVIREHPVLLNRAPTLHRLGIQAFEPVLIEGKAIQLHPLVCAAYNADFDGDQMAVHVPLTLEAQLEARALMMSTNNILSPANGEPIIVPSQDVVLGLYYMTRDCVNAKGEGMVLTGPKEAERLYRSGLASLHARVKVRITEYKKDANGELVAKTSLKDTTVGRAILWMIVPKGLPYSIVNQALGKKAISKMLNTCYRILGLKPTVIFADQIMYTGFTYAARSGASVGIDDMVIPEKKHEIISEAEAEVAEIQEQFQSGLVTAGERYNKVIDIWAAANDRVSKAMMDNLQTETVINRDGQEEKQVSFNSIYMMADSGARGSAAQIRQLAGMRGLMAKPDGSIIETPITANFREGLNVLQYFISTHGARKGLADTALKTANSGYLTRRLVDVAQDLVVTEDDCGTHEGIMMTPVIEGGDVKEPLRDRVLGRVTAEDVLKPGTANILVPRNTLLHEQWCDLLEENSVDAVKVRSVVSCDTDFGVCAHCYGRDLARGHIINKGEAIGVIAAQSIGEPGTQLTMRTFHIGGAASRAAAESSIQVKNKGSIKLSNVKSVVNSSGKLVITSRNTELKLIDEFGRTKESYKVPYGAVLAKGDGEQVAGGETVANWDPHTMPVITEVSGFVRFTDMIDGQTITRQTDELTGLSSLVVLDSAERTAGGKDLRPALKIVDAQGNDVLIPGTDMPAQYFLPGKAIVQLEDGVQISSGDTLARIPQESGGTKDITGGLPRVADLFEARRPKEPAILAEISGIVSFGKETKGKRRLVITPVDGSDPYEEMIPKWRQLNVFEGERVERGDVISDGPEAPHDILRLRGVHAVTRYIVNEVQDVYRLQGVKINDKHIEVIVRQMLRKATIVNAGSSDFLEGEQVEYSRVKIANRELEANGKVGATYSRDLLGITKASLATESFISAASFQETTRVLTEAAVAGKRDELRGLKENVIVGRLIPAGTGYAYHQDRMRRRAAGEAPAAPQVTAEDASASLAELLNAGLGGSDNE</sequence>
<feature type="chain" id="PRO_0000225578" description="DNA-directed RNA polymerase subunit beta'">
    <location>
        <begin position="1"/>
        <end position="1407"/>
    </location>
</feature>
<feature type="binding site" evidence="1">
    <location>
        <position position="70"/>
    </location>
    <ligand>
        <name>Zn(2+)</name>
        <dbReference type="ChEBI" id="CHEBI:29105"/>
        <label>1</label>
    </ligand>
</feature>
<feature type="binding site" evidence="1">
    <location>
        <position position="72"/>
    </location>
    <ligand>
        <name>Zn(2+)</name>
        <dbReference type="ChEBI" id="CHEBI:29105"/>
        <label>1</label>
    </ligand>
</feature>
<feature type="binding site" evidence="1">
    <location>
        <position position="85"/>
    </location>
    <ligand>
        <name>Zn(2+)</name>
        <dbReference type="ChEBI" id="CHEBI:29105"/>
        <label>1</label>
    </ligand>
</feature>
<feature type="binding site" evidence="1">
    <location>
        <position position="88"/>
    </location>
    <ligand>
        <name>Zn(2+)</name>
        <dbReference type="ChEBI" id="CHEBI:29105"/>
        <label>1</label>
    </ligand>
</feature>
<feature type="binding site" evidence="1">
    <location>
        <position position="460"/>
    </location>
    <ligand>
        <name>Mg(2+)</name>
        <dbReference type="ChEBI" id="CHEBI:18420"/>
    </ligand>
</feature>
<feature type="binding site" evidence="1">
    <location>
        <position position="462"/>
    </location>
    <ligand>
        <name>Mg(2+)</name>
        <dbReference type="ChEBI" id="CHEBI:18420"/>
    </ligand>
</feature>
<feature type="binding site" evidence="1">
    <location>
        <position position="464"/>
    </location>
    <ligand>
        <name>Mg(2+)</name>
        <dbReference type="ChEBI" id="CHEBI:18420"/>
    </ligand>
</feature>
<feature type="binding site" evidence="1">
    <location>
        <position position="814"/>
    </location>
    <ligand>
        <name>Zn(2+)</name>
        <dbReference type="ChEBI" id="CHEBI:29105"/>
        <label>2</label>
    </ligand>
</feature>
<feature type="binding site" evidence="1">
    <location>
        <position position="888"/>
    </location>
    <ligand>
        <name>Zn(2+)</name>
        <dbReference type="ChEBI" id="CHEBI:29105"/>
        <label>2</label>
    </ligand>
</feature>
<feature type="binding site" evidence="1">
    <location>
        <position position="895"/>
    </location>
    <ligand>
        <name>Zn(2+)</name>
        <dbReference type="ChEBI" id="CHEBI:29105"/>
        <label>2</label>
    </ligand>
</feature>
<feature type="binding site" evidence="1">
    <location>
        <position position="898"/>
    </location>
    <ligand>
        <name>Zn(2+)</name>
        <dbReference type="ChEBI" id="CHEBI:29105"/>
        <label>2</label>
    </ligand>
</feature>
<feature type="modified residue" description="N6-acetyllysine" evidence="1">
    <location>
        <position position="972"/>
    </location>
</feature>
<comment type="function">
    <text evidence="1">DNA-dependent RNA polymerase catalyzes the transcription of DNA into RNA using the four ribonucleoside triphosphates as substrates.</text>
</comment>
<comment type="catalytic activity">
    <reaction evidence="1">
        <text>RNA(n) + a ribonucleoside 5'-triphosphate = RNA(n+1) + diphosphate</text>
        <dbReference type="Rhea" id="RHEA:21248"/>
        <dbReference type="Rhea" id="RHEA-COMP:14527"/>
        <dbReference type="Rhea" id="RHEA-COMP:17342"/>
        <dbReference type="ChEBI" id="CHEBI:33019"/>
        <dbReference type="ChEBI" id="CHEBI:61557"/>
        <dbReference type="ChEBI" id="CHEBI:140395"/>
        <dbReference type="EC" id="2.7.7.6"/>
    </reaction>
</comment>
<comment type="cofactor">
    <cofactor evidence="1">
        <name>Mg(2+)</name>
        <dbReference type="ChEBI" id="CHEBI:18420"/>
    </cofactor>
    <text evidence="1">Binds 1 Mg(2+) ion per subunit.</text>
</comment>
<comment type="cofactor">
    <cofactor evidence="1">
        <name>Zn(2+)</name>
        <dbReference type="ChEBI" id="CHEBI:29105"/>
    </cofactor>
    <text evidence="1">Binds 2 Zn(2+) ions per subunit.</text>
</comment>
<comment type="subunit">
    <text evidence="1">The RNAP catalytic core consists of 2 alpha, 1 beta, 1 beta' and 1 omega subunit. When a sigma factor is associated with the core the holoenzyme is formed, which can initiate transcription.</text>
</comment>
<comment type="similarity">
    <text evidence="1">Belongs to the RNA polymerase beta' chain family.</text>
</comment>
<name>RPOC_SHIDS</name>
<proteinExistence type="inferred from homology"/>
<protein>
    <recommendedName>
        <fullName evidence="1">DNA-directed RNA polymerase subunit beta'</fullName>
        <shortName evidence="1">RNAP subunit beta'</shortName>
        <ecNumber evidence="1">2.7.7.6</ecNumber>
    </recommendedName>
    <alternativeName>
        <fullName evidence="1">RNA polymerase subunit beta'</fullName>
    </alternativeName>
    <alternativeName>
        <fullName evidence="1">Transcriptase subunit beta'</fullName>
    </alternativeName>
</protein>
<organism>
    <name type="scientific">Shigella dysenteriae serotype 1 (strain Sd197)</name>
    <dbReference type="NCBI Taxonomy" id="300267"/>
    <lineage>
        <taxon>Bacteria</taxon>
        <taxon>Pseudomonadati</taxon>
        <taxon>Pseudomonadota</taxon>
        <taxon>Gammaproteobacteria</taxon>
        <taxon>Enterobacterales</taxon>
        <taxon>Enterobacteriaceae</taxon>
        <taxon>Shigella</taxon>
    </lineage>
</organism>
<dbReference type="EC" id="2.7.7.6" evidence="1"/>
<dbReference type="EMBL" id="CP000034">
    <property type="protein sequence ID" value="ABB63695.1"/>
    <property type="molecule type" value="Genomic_DNA"/>
</dbReference>
<dbReference type="RefSeq" id="WP_000653954.1">
    <property type="nucleotide sequence ID" value="NC_007606.1"/>
</dbReference>
<dbReference type="RefSeq" id="YP_405186.1">
    <property type="nucleotide sequence ID" value="NC_007606.1"/>
</dbReference>
<dbReference type="SMR" id="Q32AG0"/>
<dbReference type="STRING" id="300267.SDY_3740"/>
<dbReference type="EnsemblBacteria" id="ABB63695">
    <property type="protein sequence ID" value="ABB63695"/>
    <property type="gene ID" value="SDY_3740"/>
</dbReference>
<dbReference type="KEGG" id="sdy:SDY_3740"/>
<dbReference type="PATRIC" id="fig|300267.13.peg.4435"/>
<dbReference type="HOGENOM" id="CLU_000524_3_1_6"/>
<dbReference type="Proteomes" id="UP000002716">
    <property type="component" value="Chromosome"/>
</dbReference>
<dbReference type="GO" id="GO:0000428">
    <property type="term" value="C:DNA-directed RNA polymerase complex"/>
    <property type="evidence" value="ECO:0007669"/>
    <property type="project" value="UniProtKB-KW"/>
</dbReference>
<dbReference type="GO" id="GO:0003677">
    <property type="term" value="F:DNA binding"/>
    <property type="evidence" value="ECO:0007669"/>
    <property type="project" value="UniProtKB-UniRule"/>
</dbReference>
<dbReference type="GO" id="GO:0003899">
    <property type="term" value="F:DNA-directed RNA polymerase activity"/>
    <property type="evidence" value="ECO:0007669"/>
    <property type="project" value="UniProtKB-UniRule"/>
</dbReference>
<dbReference type="GO" id="GO:0000287">
    <property type="term" value="F:magnesium ion binding"/>
    <property type="evidence" value="ECO:0007669"/>
    <property type="project" value="UniProtKB-UniRule"/>
</dbReference>
<dbReference type="GO" id="GO:0008270">
    <property type="term" value="F:zinc ion binding"/>
    <property type="evidence" value="ECO:0007669"/>
    <property type="project" value="UniProtKB-UniRule"/>
</dbReference>
<dbReference type="GO" id="GO:0006351">
    <property type="term" value="P:DNA-templated transcription"/>
    <property type="evidence" value="ECO:0007669"/>
    <property type="project" value="UniProtKB-UniRule"/>
</dbReference>
<dbReference type="CDD" id="cd02655">
    <property type="entry name" value="RNAP_beta'_C"/>
    <property type="match status" value="1"/>
</dbReference>
<dbReference type="CDD" id="cd01609">
    <property type="entry name" value="RNAP_beta'_N"/>
    <property type="match status" value="1"/>
</dbReference>
<dbReference type="FunFam" id="1.10.132.30:FF:000003">
    <property type="entry name" value="DNA-directed RNA polymerase subunit beta"/>
    <property type="match status" value="1"/>
</dbReference>
<dbReference type="FunFam" id="1.10.150.390:FF:000002">
    <property type="entry name" value="DNA-directed RNA polymerase subunit beta"/>
    <property type="match status" value="1"/>
</dbReference>
<dbReference type="FunFam" id="1.10.274.100:FF:000002">
    <property type="entry name" value="DNA-directed RNA polymerase subunit beta"/>
    <property type="match status" value="1"/>
</dbReference>
<dbReference type="FunFam" id="1.10.40.90:FF:000001">
    <property type="entry name" value="DNA-directed RNA polymerase subunit beta"/>
    <property type="match status" value="1"/>
</dbReference>
<dbReference type="FunFam" id="2.40.50.100:FF:000012">
    <property type="entry name" value="DNA-directed RNA polymerase subunit beta"/>
    <property type="match status" value="1"/>
</dbReference>
<dbReference type="FunFam" id="2.40.50.100:FF:000016">
    <property type="entry name" value="DNA-directed RNA polymerase subunit beta"/>
    <property type="match status" value="1"/>
</dbReference>
<dbReference type="FunFam" id="2.40.50.100:FF:000019">
    <property type="entry name" value="DNA-directed RNA polymerase subunit beta"/>
    <property type="match status" value="1"/>
</dbReference>
<dbReference type="FunFam" id="4.10.860.120:FF:000001">
    <property type="entry name" value="DNA-directed RNA polymerase subunit beta"/>
    <property type="match status" value="1"/>
</dbReference>
<dbReference type="Gene3D" id="1.10.132.30">
    <property type="match status" value="1"/>
</dbReference>
<dbReference type="Gene3D" id="1.10.150.390">
    <property type="match status" value="1"/>
</dbReference>
<dbReference type="Gene3D" id="1.10.1790.20">
    <property type="match status" value="1"/>
</dbReference>
<dbReference type="Gene3D" id="1.10.40.90">
    <property type="match status" value="1"/>
</dbReference>
<dbReference type="Gene3D" id="2.40.40.20">
    <property type="match status" value="1"/>
</dbReference>
<dbReference type="Gene3D" id="2.40.50.100">
    <property type="match status" value="3"/>
</dbReference>
<dbReference type="Gene3D" id="4.10.860.120">
    <property type="entry name" value="RNA polymerase II, clamp domain"/>
    <property type="match status" value="1"/>
</dbReference>
<dbReference type="Gene3D" id="1.10.274.100">
    <property type="entry name" value="RNA polymerase Rpb1, domain 3"/>
    <property type="match status" value="1"/>
</dbReference>
<dbReference type="HAMAP" id="MF_01322">
    <property type="entry name" value="RNApol_bact_RpoC"/>
    <property type="match status" value="1"/>
</dbReference>
<dbReference type="InterPro" id="IPR045867">
    <property type="entry name" value="DNA-dir_RpoC_beta_prime"/>
</dbReference>
<dbReference type="InterPro" id="IPR012754">
    <property type="entry name" value="DNA-dir_RpoC_beta_prime_bact"/>
</dbReference>
<dbReference type="InterPro" id="IPR000722">
    <property type="entry name" value="RNA_pol_asu"/>
</dbReference>
<dbReference type="InterPro" id="IPR006592">
    <property type="entry name" value="RNA_pol_N"/>
</dbReference>
<dbReference type="InterPro" id="IPR007080">
    <property type="entry name" value="RNA_pol_Rpb1_1"/>
</dbReference>
<dbReference type="InterPro" id="IPR007066">
    <property type="entry name" value="RNA_pol_Rpb1_3"/>
</dbReference>
<dbReference type="InterPro" id="IPR042102">
    <property type="entry name" value="RNA_pol_Rpb1_3_sf"/>
</dbReference>
<dbReference type="InterPro" id="IPR007083">
    <property type="entry name" value="RNA_pol_Rpb1_4"/>
</dbReference>
<dbReference type="InterPro" id="IPR007081">
    <property type="entry name" value="RNA_pol_Rpb1_5"/>
</dbReference>
<dbReference type="InterPro" id="IPR044893">
    <property type="entry name" value="RNA_pol_Rpb1_clamp_domain"/>
</dbReference>
<dbReference type="InterPro" id="IPR038120">
    <property type="entry name" value="Rpb1_funnel_sf"/>
</dbReference>
<dbReference type="NCBIfam" id="TIGR02386">
    <property type="entry name" value="rpoC_TIGR"/>
    <property type="match status" value="1"/>
</dbReference>
<dbReference type="PANTHER" id="PTHR19376">
    <property type="entry name" value="DNA-DIRECTED RNA POLYMERASE"/>
    <property type="match status" value="1"/>
</dbReference>
<dbReference type="PANTHER" id="PTHR19376:SF54">
    <property type="entry name" value="DNA-DIRECTED RNA POLYMERASE SUBUNIT BETA"/>
    <property type="match status" value="1"/>
</dbReference>
<dbReference type="Pfam" id="PF04997">
    <property type="entry name" value="RNA_pol_Rpb1_1"/>
    <property type="match status" value="1"/>
</dbReference>
<dbReference type="Pfam" id="PF00623">
    <property type="entry name" value="RNA_pol_Rpb1_2"/>
    <property type="match status" value="2"/>
</dbReference>
<dbReference type="Pfam" id="PF04983">
    <property type="entry name" value="RNA_pol_Rpb1_3"/>
    <property type="match status" value="1"/>
</dbReference>
<dbReference type="Pfam" id="PF05000">
    <property type="entry name" value="RNA_pol_Rpb1_4"/>
    <property type="match status" value="1"/>
</dbReference>
<dbReference type="Pfam" id="PF04998">
    <property type="entry name" value="RNA_pol_Rpb1_5"/>
    <property type="match status" value="1"/>
</dbReference>
<dbReference type="SMART" id="SM00663">
    <property type="entry name" value="RPOLA_N"/>
    <property type="match status" value="1"/>
</dbReference>
<dbReference type="SUPFAM" id="SSF64484">
    <property type="entry name" value="beta and beta-prime subunits of DNA dependent RNA-polymerase"/>
    <property type="match status" value="1"/>
</dbReference>
<gene>
    <name evidence="1" type="primary">rpoC</name>
    <name type="ordered locus">SDY_3740</name>
</gene>
<evidence type="ECO:0000255" key="1">
    <source>
        <dbReference type="HAMAP-Rule" id="MF_01322"/>
    </source>
</evidence>